<protein>
    <recommendedName>
        <fullName>Apoptosis facilitator Bcl-2-like protein 14</fullName>
        <shortName>Bcl2-L-14</shortName>
    </recommendedName>
</protein>
<reference key="1">
    <citation type="journal article" date="2005" name="BMC Genomics">
        <title>Characterization of 954 bovine full-CDS cDNA sequences.</title>
        <authorList>
            <person name="Harhay G.P."/>
            <person name="Sonstegard T.S."/>
            <person name="Keele J.W."/>
            <person name="Heaton M.P."/>
            <person name="Clawson M.L."/>
            <person name="Snelling W.M."/>
            <person name="Wiedmann R.T."/>
            <person name="Van Tassell C.P."/>
            <person name="Smith T.P.L."/>
        </authorList>
    </citation>
    <scope>NUCLEOTIDE SEQUENCE [LARGE SCALE MRNA]</scope>
</reference>
<feature type="chain" id="PRO_0000254026" description="Apoptosis facilitator Bcl-2-like protein 14">
    <location>
        <begin position="1"/>
        <end position="326"/>
    </location>
</feature>
<feature type="region of interest" description="Disordered" evidence="3">
    <location>
        <begin position="100"/>
        <end position="147"/>
    </location>
</feature>
<feature type="short sequence motif" description="BH3">
    <location>
        <begin position="211"/>
        <end position="225"/>
    </location>
</feature>
<feature type="short sequence motif" description="BH2">
    <location>
        <begin position="307"/>
        <end position="314"/>
    </location>
</feature>
<feature type="compositionally biased region" description="Basic and acidic residues" evidence="3">
    <location>
        <begin position="137"/>
        <end position="147"/>
    </location>
</feature>
<feature type="modified residue" description="Phosphoserine" evidence="2">
    <location>
        <position position="44"/>
    </location>
</feature>
<evidence type="ECO:0000250" key="1"/>
<evidence type="ECO:0000250" key="2">
    <source>
        <dbReference type="UniProtKB" id="Q6AYK4"/>
    </source>
</evidence>
<evidence type="ECO:0000256" key="3">
    <source>
        <dbReference type="SAM" id="MobiDB-lite"/>
    </source>
</evidence>
<evidence type="ECO:0000305" key="4"/>
<comment type="function">
    <text>Plays a role in apoptosis.</text>
</comment>
<comment type="subcellular location">
    <subcellularLocation>
        <location evidence="1">Cytoplasm</location>
    </subcellularLocation>
</comment>
<comment type="PTM">
    <text evidence="1">Phosphorylated by MELK, leading to inhibit its pro-apoptotic function.</text>
</comment>
<comment type="similarity">
    <text evidence="4">Belongs to the Bcl-2 family.</text>
</comment>
<sequence length="326" mass="36839">MCTASPCDLEEIPLDDEDSDSLEFKILEFYVKHHVFQNTSAILSPKHLRTRSLSQKGPERWPVSEAWTQGPWPCRHSQSSEKAINLTKKKSSWRTLFGVAEKEEDSQSSPPEICAQAQRSGVPQARPRSPKWPRSRSSMDQRLEHKAADPRVVSIANRVAEIVYSWPPPEEVHSQGGGFKSKGVLVFQGPQGQSGAESTKKEGEDQIIARIVELLKYSGEQLERELKKDKVLMTCFQDVLSYSVVKTITDQFLRGVDTRGESEVKAQSFKAALAIDVIAKLTTIDNHPMNRVLGFGTKYLKENFSPWIQQHGGWEKILRMPHEEVD</sequence>
<proteinExistence type="evidence at transcript level"/>
<dbReference type="EMBL" id="BT020906">
    <property type="protein sequence ID" value="AAX08923.1"/>
    <property type="molecule type" value="mRNA"/>
</dbReference>
<dbReference type="RefSeq" id="NP_001015544.1">
    <property type="nucleotide sequence ID" value="NM_001015544.1"/>
</dbReference>
<dbReference type="FunCoup" id="Q5E9L4">
    <property type="interactions" value="24"/>
</dbReference>
<dbReference type="STRING" id="9913.ENSBTAP00000054020"/>
<dbReference type="PaxDb" id="9913-ENSBTAP00000054020"/>
<dbReference type="GeneID" id="508365"/>
<dbReference type="KEGG" id="bta:508365"/>
<dbReference type="CTD" id="79370"/>
<dbReference type="eggNOG" id="KOG4728">
    <property type="taxonomic scope" value="Eukaryota"/>
</dbReference>
<dbReference type="InParanoid" id="Q5E9L4"/>
<dbReference type="OrthoDB" id="9948726at2759"/>
<dbReference type="Proteomes" id="UP000009136">
    <property type="component" value="Unplaced"/>
</dbReference>
<dbReference type="GO" id="GO:0005737">
    <property type="term" value="C:cytoplasm"/>
    <property type="evidence" value="ECO:0007669"/>
    <property type="project" value="UniProtKB-SubCell"/>
</dbReference>
<dbReference type="GO" id="GO:0006915">
    <property type="term" value="P:apoptotic process"/>
    <property type="evidence" value="ECO:0007669"/>
    <property type="project" value="UniProtKB-KW"/>
</dbReference>
<dbReference type="GO" id="GO:0042981">
    <property type="term" value="P:regulation of apoptotic process"/>
    <property type="evidence" value="ECO:0007669"/>
    <property type="project" value="InterPro"/>
</dbReference>
<dbReference type="Gene3D" id="1.10.437.10">
    <property type="entry name" value="Blc2-like"/>
    <property type="match status" value="1"/>
</dbReference>
<dbReference type="InterPro" id="IPR036834">
    <property type="entry name" value="Bcl-2-like_sf"/>
</dbReference>
<dbReference type="InterPro" id="IPR002475">
    <property type="entry name" value="Bcl2-like"/>
</dbReference>
<dbReference type="PANTHER" id="PTHR14965:SF1">
    <property type="entry name" value="APOPTOSIS FACILITATOR BCL-2-LIKE PROTEIN 14"/>
    <property type="match status" value="1"/>
</dbReference>
<dbReference type="PANTHER" id="PTHR14965">
    <property type="entry name" value="SI:CH73-248E21.1"/>
    <property type="match status" value="1"/>
</dbReference>
<dbReference type="SUPFAM" id="SSF56854">
    <property type="entry name" value="Bcl-2 inhibitors of programmed cell death"/>
    <property type="match status" value="1"/>
</dbReference>
<dbReference type="PROSITE" id="PS50062">
    <property type="entry name" value="BCL2_FAMILY"/>
    <property type="match status" value="1"/>
</dbReference>
<accession>Q5E9L4</accession>
<keyword id="KW-0053">Apoptosis</keyword>
<keyword id="KW-0963">Cytoplasm</keyword>
<keyword id="KW-0597">Phosphoprotein</keyword>
<keyword id="KW-1185">Reference proteome</keyword>
<gene>
    <name type="primary">BCL2L14</name>
</gene>
<organism>
    <name type="scientific">Bos taurus</name>
    <name type="common">Bovine</name>
    <dbReference type="NCBI Taxonomy" id="9913"/>
    <lineage>
        <taxon>Eukaryota</taxon>
        <taxon>Metazoa</taxon>
        <taxon>Chordata</taxon>
        <taxon>Craniata</taxon>
        <taxon>Vertebrata</taxon>
        <taxon>Euteleostomi</taxon>
        <taxon>Mammalia</taxon>
        <taxon>Eutheria</taxon>
        <taxon>Laurasiatheria</taxon>
        <taxon>Artiodactyla</taxon>
        <taxon>Ruminantia</taxon>
        <taxon>Pecora</taxon>
        <taxon>Bovidae</taxon>
        <taxon>Bovinae</taxon>
        <taxon>Bos</taxon>
    </lineage>
</organism>
<name>B2L14_BOVIN</name>